<feature type="signal peptide" description="Tat-type signal" evidence="2">
    <location>
        <begin position="1"/>
        <end position="33"/>
    </location>
</feature>
<feature type="chain" id="PRO_0000019159" description="Trimethylamine-N-oxide reductase">
    <location>
        <begin position="34"/>
        <end position="820"/>
    </location>
</feature>
<feature type="binding site" evidence="1">
    <location>
        <position position="179"/>
    </location>
    <ligand>
        <name>Mo-bis(molybdopterin guanine dinucleotide)</name>
        <dbReference type="ChEBI" id="CHEBI:60539"/>
    </ligand>
    <ligandPart>
        <name>Mo</name>
        <dbReference type="ChEBI" id="CHEBI:28685"/>
    </ligandPart>
</feature>
<gene>
    <name type="primary">torA</name>
    <name type="ordered locus">VC_1692</name>
</gene>
<dbReference type="EC" id="1.7.2.3"/>
<dbReference type="EMBL" id="AE003852">
    <property type="protein sequence ID" value="AAF94842.1"/>
    <property type="molecule type" value="Genomic_DNA"/>
</dbReference>
<dbReference type="PIR" id="G82168">
    <property type="entry name" value="G82168"/>
</dbReference>
<dbReference type="RefSeq" id="NP_231328.1">
    <property type="nucleotide sequence ID" value="NC_002505.1"/>
</dbReference>
<dbReference type="RefSeq" id="WP_001018812.1">
    <property type="nucleotide sequence ID" value="NZ_LT906614.1"/>
</dbReference>
<dbReference type="SMR" id="Q9KRF0"/>
<dbReference type="STRING" id="243277.VC_1692"/>
<dbReference type="DNASU" id="2613823"/>
<dbReference type="EnsemblBacteria" id="AAF94842">
    <property type="protein sequence ID" value="AAF94842"/>
    <property type="gene ID" value="VC_1692"/>
</dbReference>
<dbReference type="KEGG" id="vch:VC_1692"/>
<dbReference type="PATRIC" id="fig|243277.26.peg.1619"/>
<dbReference type="eggNOG" id="COG0243">
    <property type="taxonomic scope" value="Bacteria"/>
</dbReference>
<dbReference type="HOGENOM" id="CLU_000422_13_3_6"/>
<dbReference type="Proteomes" id="UP000000584">
    <property type="component" value="Chromosome 1"/>
</dbReference>
<dbReference type="GO" id="GO:0030288">
    <property type="term" value="C:outer membrane-bounded periplasmic space"/>
    <property type="evidence" value="ECO:0000318"/>
    <property type="project" value="GO_Central"/>
</dbReference>
<dbReference type="GO" id="GO:0009055">
    <property type="term" value="F:electron transfer activity"/>
    <property type="evidence" value="ECO:0000318"/>
    <property type="project" value="GO_Central"/>
</dbReference>
<dbReference type="GO" id="GO:0030151">
    <property type="term" value="F:molybdenum ion binding"/>
    <property type="evidence" value="ECO:0000318"/>
    <property type="project" value="GO_Central"/>
</dbReference>
<dbReference type="GO" id="GO:0043546">
    <property type="term" value="F:molybdopterin cofactor binding"/>
    <property type="evidence" value="ECO:0007669"/>
    <property type="project" value="InterPro"/>
</dbReference>
<dbReference type="GO" id="GO:0050626">
    <property type="term" value="F:trimethylamine-N-oxide reductase (cytochrome c) activity"/>
    <property type="evidence" value="ECO:0007669"/>
    <property type="project" value="UniProtKB-EC"/>
</dbReference>
<dbReference type="GO" id="GO:0009061">
    <property type="term" value="P:anaerobic respiration"/>
    <property type="evidence" value="ECO:0000318"/>
    <property type="project" value="GO_Central"/>
</dbReference>
<dbReference type="CDD" id="cd02793">
    <property type="entry name" value="MopB_CT_DMSOR-BSOR-TMAOR"/>
    <property type="match status" value="1"/>
</dbReference>
<dbReference type="FunFam" id="2.40.40.20:FF:000009">
    <property type="entry name" value="Biotin sulfoxide reductase 2"/>
    <property type="match status" value="1"/>
</dbReference>
<dbReference type="FunFam" id="3.40.228.10:FF:000003">
    <property type="entry name" value="Biotin sulfoxide reductase 2"/>
    <property type="match status" value="1"/>
</dbReference>
<dbReference type="Gene3D" id="2.40.40.20">
    <property type="match status" value="1"/>
</dbReference>
<dbReference type="Gene3D" id="3.40.50.740">
    <property type="match status" value="1"/>
</dbReference>
<dbReference type="Gene3D" id="3.40.228.10">
    <property type="entry name" value="Dimethylsulfoxide Reductase, domain 2"/>
    <property type="match status" value="1"/>
</dbReference>
<dbReference type="Gene3D" id="3.90.55.10">
    <property type="entry name" value="Dimethylsulfoxide Reductase, domain 3"/>
    <property type="match status" value="1"/>
</dbReference>
<dbReference type="InterPro" id="IPR009010">
    <property type="entry name" value="Asp_de-COase-like_dom_sf"/>
</dbReference>
<dbReference type="InterPro" id="IPR041954">
    <property type="entry name" value="CT_DMSOR/BSOR/TMAOR"/>
</dbReference>
<dbReference type="InterPro" id="IPR041460">
    <property type="entry name" value="Molybdopterin_N"/>
</dbReference>
<dbReference type="InterPro" id="IPR006657">
    <property type="entry name" value="MoPterin_dinucl-bd_dom"/>
</dbReference>
<dbReference type="InterPro" id="IPR006656">
    <property type="entry name" value="Mopterin_OxRdtase"/>
</dbReference>
<dbReference type="InterPro" id="IPR006655">
    <property type="entry name" value="Mopterin_OxRdtase_prok_CS"/>
</dbReference>
<dbReference type="InterPro" id="IPR050612">
    <property type="entry name" value="Prok_Mopterin_Oxidored"/>
</dbReference>
<dbReference type="InterPro" id="IPR006311">
    <property type="entry name" value="TAT_signal"/>
</dbReference>
<dbReference type="InterPro" id="IPR019546">
    <property type="entry name" value="TAT_signal_bac_arc"/>
</dbReference>
<dbReference type="InterPro" id="IPR011887">
    <property type="entry name" value="TorA"/>
</dbReference>
<dbReference type="NCBIfam" id="NF011682">
    <property type="entry name" value="PRK15102.1"/>
    <property type="match status" value="1"/>
</dbReference>
<dbReference type="NCBIfam" id="TIGR01409">
    <property type="entry name" value="TAT_signal_seq"/>
    <property type="match status" value="1"/>
</dbReference>
<dbReference type="NCBIfam" id="TIGR02164">
    <property type="entry name" value="torA"/>
    <property type="match status" value="1"/>
</dbReference>
<dbReference type="PANTHER" id="PTHR43742">
    <property type="entry name" value="TRIMETHYLAMINE-N-OXIDE REDUCTASE"/>
    <property type="match status" value="1"/>
</dbReference>
<dbReference type="PANTHER" id="PTHR43742:SF4">
    <property type="entry name" value="TRIMETHYLAMINE-N-OXIDE REDUCTASE 1"/>
    <property type="match status" value="1"/>
</dbReference>
<dbReference type="Pfam" id="PF00384">
    <property type="entry name" value="Molybdopterin"/>
    <property type="match status" value="1"/>
</dbReference>
<dbReference type="Pfam" id="PF18364">
    <property type="entry name" value="Molybdopterin_N"/>
    <property type="match status" value="1"/>
</dbReference>
<dbReference type="Pfam" id="PF01568">
    <property type="entry name" value="Molydop_binding"/>
    <property type="match status" value="1"/>
</dbReference>
<dbReference type="SUPFAM" id="SSF50692">
    <property type="entry name" value="ADC-like"/>
    <property type="match status" value="1"/>
</dbReference>
<dbReference type="SUPFAM" id="SSF53706">
    <property type="entry name" value="Formate dehydrogenase/DMSO reductase, domains 1-3"/>
    <property type="match status" value="1"/>
</dbReference>
<dbReference type="PROSITE" id="PS00490">
    <property type="entry name" value="MOLYBDOPTERIN_PROK_2"/>
    <property type="match status" value="1"/>
</dbReference>
<dbReference type="PROSITE" id="PS00932">
    <property type="entry name" value="MOLYBDOPTERIN_PROK_3"/>
    <property type="match status" value="1"/>
</dbReference>
<dbReference type="PROSITE" id="PS51318">
    <property type="entry name" value="TAT"/>
    <property type="match status" value="1"/>
</dbReference>
<accession>Q9KRF0</accession>
<protein>
    <recommendedName>
        <fullName>Trimethylamine-N-oxide reductase</fullName>
        <shortName>TMAO reductase</shortName>
        <shortName>Trimethylamine oxidase</shortName>
        <ecNumber>1.7.2.3</ecNumber>
    </recommendedName>
</protein>
<evidence type="ECO:0000250" key="1"/>
<evidence type="ECO:0000255" key="2">
    <source>
        <dbReference type="PROSITE-ProRule" id="PRU00648"/>
    </source>
</evidence>
<evidence type="ECO:0000305" key="3"/>
<proteinExistence type="inferred from homology"/>
<name>TORA_VIBCH</name>
<organism>
    <name type="scientific">Vibrio cholerae serotype O1 (strain ATCC 39315 / El Tor Inaba N16961)</name>
    <dbReference type="NCBI Taxonomy" id="243277"/>
    <lineage>
        <taxon>Bacteria</taxon>
        <taxon>Pseudomonadati</taxon>
        <taxon>Pseudomonadota</taxon>
        <taxon>Gammaproteobacteria</taxon>
        <taxon>Vibrionales</taxon>
        <taxon>Vibrionaceae</taxon>
        <taxon>Vibrio</taxon>
    </lineage>
</organism>
<comment type="function">
    <text evidence="1">Reduces trimethylamine-N-oxide (TMAO) into trimethylamine; an anaerobic reaction coupled to energy-yielding reactions.</text>
</comment>
<comment type="catalytic activity">
    <reaction>
        <text>trimethylamine + 2 Fe(III)-[cytochrome c] + H2O = trimethylamine N-oxide + 2 Fe(II)-[cytochrome c] + 3 H(+)</text>
        <dbReference type="Rhea" id="RHEA:24236"/>
        <dbReference type="Rhea" id="RHEA-COMP:10350"/>
        <dbReference type="Rhea" id="RHEA-COMP:14399"/>
        <dbReference type="ChEBI" id="CHEBI:15377"/>
        <dbReference type="ChEBI" id="CHEBI:15378"/>
        <dbReference type="ChEBI" id="CHEBI:15724"/>
        <dbReference type="ChEBI" id="CHEBI:29033"/>
        <dbReference type="ChEBI" id="CHEBI:29034"/>
        <dbReference type="ChEBI" id="CHEBI:58389"/>
        <dbReference type="EC" id="1.7.2.3"/>
    </reaction>
</comment>
<comment type="cofactor">
    <cofactor evidence="1">
        <name>Mo-bis(molybdopterin guanine dinucleotide)</name>
        <dbReference type="ChEBI" id="CHEBI:60539"/>
    </cofactor>
    <text evidence="1">Binds 1 molybdenum-bis(molybdopterin guanine dinucleotide) (Mo-bis-MGD) cofactor per subunit.</text>
</comment>
<comment type="subcellular location">
    <subcellularLocation>
        <location evidence="1">Periplasm</location>
    </subcellularLocation>
</comment>
<comment type="PTM">
    <text>Predicted to be exported by the Tat system. The position of the signal peptide cleavage has not been experimentally proven.</text>
</comment>
<comment type="similarity">
    <text evidence="3">Belongs to the prokaryotic molybdopterin-containing oxidoreductase family.</text>
</comment>
<reference key="1">
    <citation type="journal article" date="2000" name="Nature">
        <title>DNA sequence of both chromosomes of the cholera pathogen Vibrio cholerae.</title>
        <authorList>
            <person name="Heidelberg J.F."/>
            <person name="Eisen J.A."/>
            <person name="Nelson W.C."/>
            <person name="Clayton R.A."/>
            <person name="Gwinn M.L."/>
            <person name="Dodson R.J."/>
            <person name="Haft D.H."/>
            <person name="Hickey E.K."/>
            <person name="Peterson J.D."/>
            <person name="Umayam L.A."/>
            <person name="Gill S.R."/>
            <person name="Nelson K.E."/>
            <person name="Read T.D."/>
            <person name="Tettelin H."/>
            <person name="Richardson D.L."/>
            <person name="Ermolaeva M.D."/>
            <person name="Vamathevan J.J."/>
            <person name="Bass S."/>
            <person name="Qin H."/>
            <person name="Dragoi I."/>
            <person name="Sellers P."/>
            <person name="McDonald L.A."/>
            <person name="Utterback T.R."/>
            <person name="Fleischmann R.D."/>
            <person name="Nierman W.C."/>
            <person name="White O."/>
            <person name="Salzberg S.L."/>
            <person name="Smith H.O."/>
            <person name="Colwell R.R."/>
            <person name="Mekalanos J.J."/>
            <person name="Venter J.C."/>
            <person name="Fraser C.M."/>
        </authorList>
    </citation>
    <scope>NUCLEOTIDE SEQUENCE [LARGE SCALE GENOMIC DNA]</scope>
    <source>
        <strain>ATCC 39315 / El Tor Inaba N16961</strain>
    </source>
</reference>
<sequence length="820" mass="92305">MAITRRSFLKGVATTSAASIIGPSLLTSVSAQAAETTGTWKVSGSHWGAFRAHIYGGKVQELKALELDTHPTEMLNGIQGILYSPSRVRYPMVRLDWLKKHKYSAETRGNNRFIRVTWDEAIDLFYRELERVQKQYGPWALHAGQTGWNQTGAFHNCTAMMQRAVGMHGNYITKVGDYSTGAGQTIMPYVLGSTEVYAQGTSWSEILDNSDNIILWANDPVKNLQVGWNCETHQSFGYLDQLKEKVAKGEINVVSVDPVKNKTQRFLQNDHLYINPQTDVAFMLALAHVLYTENLYDKKFIETYCLGFEEFIPYVLGKSKDKVEKTPEWAATICGVKPDAIRDFARMLVNGRTQLLFGWCIQRQEHGEQPYWMGAVLAAMIGQIGLPGGGISYGHHYSGIGVPSTGFAGPGGFPRNLDQGAKPKWDNNDFNGYSRTIPVARWIDAILEPGKKINHNGNTVTLPGFKMMVISGCNPWHHHQDRNKMKRAFQKLETVVTIDFSWTATCRFSDIVLPACTQWERNDIDSYGSYSGKGLIAMHRLVDPLFQSRTDFEIMTELTRRFGREKEYTRGMDEMEWVRSLYDECKKANEGKFAMPEFEEFWEKGFLDFGTGTPWVRHADFRKDPEINALGTPSGFIEITSRKIGRYGYEHCQEHPMWFEKTERSHGGPGSDKHPFWLQSCHPDKRLHSQMCEAEAFRATYAVQGREPVYINPLDAKAKGIKDGDLVRVFNDRGQLLAGAVLSDSYPRGVIRIEEGAWYGPLTEKVGAICTYGDPNTLTLDLGTSELAQATSANTCIVDFEKFRGEVPPVTSFGGPIEVI</sequence>
<keyword id="KW-0479">Metal-binding</keyword>
<keyword id="KW-0500">Molybdenum</keyword>
<keyword id="KW-0560">Oxidoreductase</keyword>
<keyword id="KW-0574">Periplasm</keyword>
<keyword id="KW-1185">Reference proteome</keyword>
<keyword id="KW-0732">Signal</keyword>